<proteinExistence type="inferred from homology"/>
<accession>P73047</accession>
<organism>
    <name type="scientific">Synechocystis sp. (strain ATCC 27184 / PCC 6803 / Kazusa)</name>
    <dbReference type="NCBI Taxonomy" id="1111708"/>
    <lineage>
        <taxon>Bacteria</taxon>
        <taxon>Bacillati</taxon>
        <taxon>Cyanobacteriota</taxon>
        <taxon>Cyanophyceae</taxon>
        <taxon>Synechococcales</taxon>
        <taxon>Merismopediaceae</taxon>
        <taxon>Synechocystis</taxon>
    </lineage>
</organism>
<reference key="1">
    <citation type="journal article" date="1996" name="DNA Res.">
        <title>Sequence analysis of the genome of the unicellular cyanobacterium Synechocystis sp. strain PCC6803. II. Sequence determination of the entire genome and assignment of potential protein-coding regions.</title>
        <authorList>
            <person name="Kaneko T."/>
            <person name="Sato S."/>
            <person name="Kotani H."/>
            <person name="Tanaka A."/>
            <person name="Asamizu E."/>
            <person name="Nakamura Y."/>
            <person name="Miyajima N."/>
            <person name="Hirosawa M."/>
            <person name="Sugiura M."/>
            <person name="Sasamoto S."/>
            <person name="Kimura T."/>
            <person name="Hosouchi T."/>
            <person name="Matsuno A."/>
            <person name="Muraki A."/>
            <person name="Nakazaki N."/>
            <person name="Naruo K."/>
            <person name="Okumura S."/>
            <person name="Shimpo S."/>
            <person name="Takeuchi C."/>
            <person name="Wada T."/>
            <person name="Watanabe A."/>
            <person name="Yamada M."/>
            <person name="Yasuda M."/>
            <person name="Tabata S."/>
        </authorList>
    </citation>
    <scope>NUCLEOTIDE SEQUENCE [LARGE SCALE GENOMIC DNA]</scope>
    <source>
        <strain>ATCC 27184 / PCC 6803 / Kazusa</strain>
    </source>
</reference>
<protein>
    <recommendedName>
        <fullName evidence="1">Urease accessory protein UreD</fullName>
    </recommendedName>
</protein>
<comment type="function">
    <text evidence="1">Required for maturation of urease via the functional incorporation of the urease nickel metallocenter.</text>
</comment>
<comment type="subunit">
    <text evidence="1">UreD, UreF and UreG form a complex that acts as a GTP-hydrolysis-dependent molecular chaperone, activating the urease apoprotein by helping to assemble the nickel containing metallocenter of UreC. The UreE protein probably delivers the nickel.</text>
</comment>
<comment type="subcellular location">
    <subcellularLocation>
        <location evidence="1">Cytoplasm</location>
    </subcellularLocation>
</comment>
<comment type="similarity">
    <text evidence="1">Belongs to the UreD family.</text>
</comment>
<comment type="sequence caution" evidence="2">
    <conflict type="erroneous initiation">
        <sequence resource="EMBL-CDS" id="BAA17068"/>
    </conflict>
</comment>
<feature type="chain" id="PRO_0000067617" description="Urease accessory protein UreD">
    <location>
        <begin position="1"/>
        <end position="270"/>
    </location>
</feature>
<gene>
    <name evidence="1" type="primary">ureD</name>
    <name type="ordered locus">sll1639</name>
</gene>
<keyword id="KW-0143">Chaperone</keyword>
<keyword id="KW-0963">Cytoplasm</keyword>
<keyword id="KW-0996">Nickel insertion</keyword>
<keyword id="KW-1185">Reference proteome</keyword>
<evidence type="ECO:0000255" key="1">
    <source>
        <dbReference type="HAMAP-Rule" id="MF_01384"/>
    </source>
</evidence>
<evidence type="ECO:0000305" key="2"/>
<dbReference type="EMBL" id="BA000022">
    <property type="protein sequence ID" value="BAA17068.1"/>
    <property type="status" value="ALT_INIT"/>
    <property type="molecule type" value="Genomic_DNA"/>
</dbReference>
<dbReference type="PIR" id="S75154">
    <property type="entry name" value="S75154"/>
</dbReference>
<dbReference type="SMR" id="P73047"/>
<dbReference type="STRING" id="1148.gene:10497929"/>
<dbReference type="PaxDb" id="1148-1652144"/>
<dbReference type="EnsemblBacteria" id="BAA17068">
    <property type="protein sequence ID" value="BAA17068"/>
    <property type="gene ID" value="BAA17068"/>
</dbReference>
<dbReference type="KEGG" id="syn:sll1639"/>
<dbReference type="eggNOG" id="COG0829">
    <property type="taxonomic scope" value="Bacteria"/>
</dbReference>
<dbReference type="InParanoid" id="P73047"/>
<dbReference type="PhylomeDB" id="P73047"/>
<dbReference type="Proteomes" id="UP000001425">
    <property type="component" value="Chromosome"/>
</dbReference>
<dbReference type="GO" id="GO:0005737">
    <property type="term" value="C:cytoplasm"/>
    <property type="evidence" value="ECO:0007669"/>
    <property type="project" value="UniProtKB-SubCell"/>
</dbReference>
<dbReference type="GO" id="GO:0016151">
    <property type="term" value="F:nickel cation binding"/>
    <property type="evidence" value="ECO:0007669"/>
    <property type="project" value="UniProtKB-UniRule"/>
</dbReference>
<dbReference type="HAMAP" id="MF_01384">
    <property type="entry name" value="UreD"/>
    <property type="match status" value="1"/>
</dbReference>
<dbReference type="InterPro" id="IPR002669">
    <property type="entry name" value="UreD"/>
</dbReference>
<dbReference type="PANTHER" id="PTHR33643">
    <property type="entry name" value="UREASE ACCESSORY PROTEIN D"/>
    <property type="match status" value="1"/>
</dbReference>
<dbReference type="PANTHER" id="PTHR33643:SF1">
    <property type="entry name" value="UREASE ACCESSORY PROTEIN D"/>
    <property type="match status" value="1"/>
</dbReference>
<dbReference type="Pfam" id="PF01774">
    <property type="entry name" value="UreD"/>
    <property type="match status" value="1"/>
</dbReference>
<name>URED_SYNY3</name>
<sequence length="270" mass="30522">MLSASTVNPSAPWQANLWLRYDRPGHRTRMVECLVQAPLKVQRSFYPDDTGQCQTMLLHTGGGMVGGDRLGYDIVLEAQSDVCFTSASAGKIYRSLGPWSEQTVNLEVRVGASVLWCPQETIIFDQARYQQNFCIKLQEQARFKGWEIVRLGRTARGEKFTQGHWRSSWEIWQGDKLIWGERQQLIGSEQLYESPNALAGFTCLGTYVDLSRSFDQDLVHQAQEIIHSQGRSPQFGLTLTATQGLIARYRGNSTQEVKDIFTQLSQVISP</sequence>